<reference key="1">
    <citation type="journal article" date="2001" name="Proc. Natl. Acad. Sci. U.S.A.">
        <title>Complete genome sequence of an M1 strain of Streptococcus pyogenes.</title>
        <authorList>
            <person name="Ferretti J.J."/>
            <person name="McShan W.M."/>
            <person name="Ajdic D.J."/>
            <person name="Savic D.J."/>
            <person name="Savic G."/>
            <person name="Lyon K."/>
            <person name="Primeaux C."/>
            <person name="Sezate S."/>
            <person name="Suvorov A.N."/>
            <person name="Kenton S."/>
            <person name="Lai H.S."/>
            <person name="Lin S.P."/>
            <person name="Qian Y."/>
            <person name="Jia H.G."/>
            <person name="Najar F.Z."/>
            <person name="Ren Q."/>
            <person name="Zhu H."/>
            <person name="Song L."/>
            <person name="White J."/>
            <person name="Yuan X."/>
            <person name="Clifton S.W."/>
            <person name="Roe B.A."/>
            <person name="McLaughlin R.E."/>
        </authorList>
    </citation>
    <scope>NUCLEOTIDE SEQUENCE [LARGE SCALE GENOMIC DNA]</scope>
    <source>
        <strain>ATCC 700294 / SF370 / Serotype M1</strain>
    </source>
</reference>
<reference key="2">
    <citation type="journal article" date="2005" name="J. Infect. Dis.">
        <title>Evolutionary origin and emergence of a highly successful clone of serotype M1 group A Streptococcus involved multiple horizontal gene transfer events.</title>
        <authorList>
            <person name="Sumby P."/>
            <person name="Porcella S.F."/>
            <person name="Madrigal A.G."/>
            <person name="Barbian K.D."/>
            <person name="Virtaneva K."/>
            <person name="Ricklefs S.M."/>
            <person name="Sturdevant D.E."/>
            <person name="Graham M.R."/>
            <person name="Vuopio-Varkila J."/>
            <person name="Hoe N.P."/>
            <person name="Musser J.M."/>
        </authorList>
    </citation>
    <scope>NUCLEOTIDE SEQUENCE [LARGE SCALE GENOMIC DNA]</scope>
    <source>
        <strain>ATCC BAA-947 / MGAS5005 / Serotype M1</strain>
    </source>
</reference>
<sequence length="85" mass="9801">MDPKKIARINELAKKKKTVGLTGPEKVEQAKLREEYIEGYRRSVRHHIEGIKLVDEEGNDVTPEKLRQVQREKGLHGRSLDDPKS</sequence>
<evidence type="ECO:0000255" key="1">
    <source>
        <dbReference type="HAMAP-Rule" id="MF_01103"/>
    </source>
</evidence>
<evidence type="ECO:0000256" key="2">
    <source>
        <dbReference type="SAM" id="MobiDB-lite"/>
    </source>
</evidence>
<accession>P60080</accession>
<accession>Q48XC4</accession>
<accession>Q99YI5</accession>
<keyword id="KW-0963">Cytoplasm</keyword>
<keyword id="KW-1185">Reference proteome</keyword>
<organism>
    <name type="scientific">Streptococcus pyogenes serotype M1</name>
    <dbReference type="NCBI Taxonomy" id="301447"/>
    <lineage>
        <taxon>Bacteria</taxon>
        <taxon>Bacillati</taxon>
        <taxon>Bacillota</taxon>
        <taxon>Bacilli</taxon>
        <taxon>Lactobacillales</taxon>
        <taxon>Streptococcaceae</taxon>
        <taxon>Streptococcus</taxon>
    </lineage>
</organism>
<feature type="chain" id="PRO_0000095002" description="UPF0291 protein SPy_1687/M5005_Spy1383">
    <location>
        <begin position="1"/>
        <end position="85"/>
    </location>
</feature>
<feature type="region of interest" description="Disordered" evidence="2">
    <location>
        <begin position="62"/>
        <end position="85"/>
    </location>
</feature>
<dbReference type="EMBL" id="AE004092">
    <property type="protein sequence ID" value="AAK34442.1"/>
    <property type="molecule type" value="Genomic_DNA"/>
</dbReference>
<dbReference type="EMBL" id="CP000017">
    <property type="protein sequence ID" value="AAZ52001.1"/>
    <property type="molecule type" value="Genomic_DNA"/>
</dbReference>
<dbReference type="RefSeq" id="NP_269721.1">
    <property type="nucleotide sequence ID" value="NC_002737.2"/>
</dbReference>
<dbReference type="SMR" id="P60080"/>
<dbReference type="PaxDb" id="1314-HKU360_01435"/>
<dbReference type="KEGG" id="spy:SPy_1687"/>
<dbReference type="KEGG" id="spz:M5005_Spy1383"/>
<dbReference type="PATRIC" id="fig|160490.10.peg.1468"/>
<dbReference type="HOGENOM" id="CLU_173137_0_2_9"/>
<dbReference type="OMA" id="KMARINE"/>
<dbReference type="Proteomes" id="UP000000750">
    <property type="component" value="Chromosome"/>
</dbReference>
<dbReference type="GO" id="GO:0005737">
    <property type="term" value="C:cytoplasm"/>
    <property type="evidence" value="ECO:0007669"/>
    <property type="project" value="UniProtKB-SubCell"/>
</dbReference>
<dbReference type="Gene3D" id="1.10.287.540">
    <property type="entry name" value="Helix hairpin bin"/>
    <property type="match status" value="1"/>
</dbReference>
<dbReference type="HAMAP" id="MF_01103">
    <property type="entry name" value="UPF0291"/>
    <property type="match status" value="1"/>
</dbReference>
<dbReference type="InterPro" id="IPR009242">
    <property type="entry name" value="DUF896"/>
</dbReference>
<dbReference type="NCBIfam" id="NF002711">
    <property type="entry name" value="PRK02539.1"/>
    <property type="match status" value="1"/>
</dbReference>
<dbReference type="PANTHER" id="PTHR37300">
    <property type="entry name" value="UPF0291 PROTEIN CBO2609/CLC_2481"/>
    <property type="match status" value="1"/>
</dbReference>
<dbReference type="PANTHER" id="PTHR37300:SF1">
    <property type="entry name" value="UPF0291 PROTEIN YNZC"/>
    <property type="match status" value="1"/>
</dbReference>
<dbReference type="Pfam" id="PF05979">
    <property type="entry name" value="DUF896"/>
    <property type="match status" value="1"/>
</dbReference>
<dbReference type="SUPFAM" id="SSF158221">
    <property type="entry name" value="YnzC-like"/>
    <property type="match status" value="1"/>
</dbReference>
<gene>
    <name type="ordered locus">SPy_1687</name>
    <name type="ordered locus">M5005_Spy1383</name>
</gene>
<protein>
    <recommendedName>
        <fullName evidence="1">UPF0291 protein SPy_1687/M5005_Spy1383</fullName>
    </recommendedName>
</protein>
<proteinExistence type="inferred from homology"/>
<name>Y1687_STRP1</name>
<comment type="subcellular location">
    <subcellularLocation>
        <location evidence="1">Cytoplasm</location>
    </subcellularLocation>
</comment>
<comment type="similarity">
    <text evidence="1">Belongs to the UPF0291 family.</text>
</comment>